<accession>P0C2H0</accession>
<geneLocation type="plasmid">
    <name>pPR3</name>
</geneLocation>
<geneLocation type="plasmid">
    <name>pRMG1</name>
</geneLocation>
<geneLocation type="plasmid">
    <name>pSMB1</name>
</geneLocation>
<reference key="1">
    <citation type="journal article" date="1991" name="FEMS Microbiol. Lett.">
        <title>Novel plasmids in clinical strains of Streptococcus pneumoniae.</title>
        <authorList>
            <person name="Sibold C."/>
            <person name="Markiewicz Z."/>
            <person name="Latorre C."/>
            <person name="Hakenbeck R."/>
        </authorList>
    </citation>
    <scope>NUCLEOTIDE SEQUENCE [GENOMIC DNA]</scope>
    <source>
        <strain>671</strain>
        <plasmid>pPR3</plasmid>
    </source>
</reference>
<reference key="2">
    <citation type="journal article" date="1999" name="Int. Microbiol.">
        <title>Construction of a new Streptococcus pneumoniae-Escherichia coli shuttle vector based on the replicon of an indigenous pneumococcal cryptic plasmid.</title>
        <authorList>
            <person name="Munoz R."/>
            <person name="Garcia E."/>
            <person name="Lopez R."/>
        </authorList>
    </citation>
    <scope>NUCLEOTIDE SEQUENCE [GENOMIC DNA]</scope>
    <source>
        <strain>13868</strain>
        <plasmid>pRMG1</plasmid>
    </source>
</reference>
<reference key="3">
    <citation type="journal article" date="1999" name="Plasmid">
        <title>Characterization of cryptic plasmids pDP1 and pSMB1 of Streptococcus pneumoniae.</title>
        <authorList>
            <person name="Oggioni M.R."/>
            <person name="Iannelli F."/>
            <person name="Pozzi G."/>
        </authorList>
    </citation>
    <scope>NUCLEOTIDE SEQUENCE [GENOMIC DNA]</scope>
    <source>
        <strain>A6011</strain>
        <plasmid>pSMB1</plasmid>
    </source>
</reference>
<gene>
    <name type="primary">orf3</name>
    <name type="synonym">orf2</name>
</gene>
<dbReference type="EMBL" id="AJ223491">
    <property type="protein sequence ID" value="CAA11409.1"/>
    <property type="molecule type" value="Genomic_DNA"/>
</dbReference>
<dbReference type="EMBL" id="AJ005619">
    <property type="protein sequence ID" value="CAA06628.1"/>
    <property type="molecule type" value="Genomic_DNA"/>
</dbReference>
<dbReference type="EMBL" id="AF047385">
    <property type="protein sequence ID" value="AAD12160.1"/>
    <property type="molecule type" value="Genomic_DNA"/>
</dbReference>
<dbReference type="RefSeq" id="NP_863585.1">
    <property type="nucleotide sequence ID" value="NC_005021.1"/>
</dbReference>
<dbReference type="RefSeq" id="WP_001860752.1">
    <property type="nucleotide sequence ID" value="NZ_WNIA01000098.1"/>
</dbReference>
<feature type="signal peptide" evidence="1">
    <location>
        <begin position="1"/>
        <end position="30"/>
    </location>
</feature>
<feature type="chain" id="PRO_0000275934" description="Uncharacterized protein SPD_2303 homolog">
    <location>
        <begin position="31"/>
        <end position="158"/>
    </location>
</feature>
<protein>
    <recommendedName>
        <fullName>Uncharacterized protein SPD_2303 homolog</fullName>
    </recommendedName>
</protein>
<organism>
    <name type="scientific">Streptococcus pneumoniae</name>
    <dbReference type="NCBI Taxonomy" id="1313"/>
    <lineage>
        <taxon>Bacteria</taxon>
        <taxon>Bacillati</taxon>
        <taxon>Bacillota</taxon>
        <taxon>Bacilli</taxon>
        <taxon>Lactobacillales</taxon>
        <taxon>Streptococcaceae</taxon>
        <taxon>Streptococcus</taxon>
    </lineage>
</organism>
<keyword id="KW-0614">Plasmid</keyword>
<keyword id="KW-0732">Signal</keyword>
<sequence length="158" mass="18145">MNKKFLKCGTLFLISCSILGSTIPAVTVFSDEVTITYNSENNSEKNELYNQLSAEKKGQFDELVSNLNLSEQEQLDLLQQYKEEHPRRAKRGIKSAIIKKVARFLAAKVGQKSVVEITDYLFEWQDNLEAGAENYLVQYGWDRNIAHWTIKTVSFIFL</sequence>
<name>Y2303_STREE</name>
<proteinExistence type="inferred from homology"/>
<evidence type="ECO:0000255" key="1"/>